<accession>Q8WZ82</accession>
<accession>Q86XN3</accession>
<accession>Q8IW87</accession>
<accession>Q9UCX9</accession>
<feature type="chain" id="PRO_0000300876" description="Esterase OVCA2">
    <location>
        <begin position="1"/>
        <end position="227"/>
    </location>
</feature>
<feature type="region of interest" description="Disordered" evidence="1">
    <location>
        <begin position="44"/>
        <end position="68"/>
    </location>
</feature>
<feature type="active site" description="Charge relay system" evidence="7">
    <location>
        <position position="119"/>
    </location>
</feature>
<feature type="active site" description="Charge relay system" evidence="7">
    <location>
        <position position="179"/>
    </location>
</feature>
<feature type="active site" description="Charge relay system" evidence="7">
    <location>
        <position position="206"/>
    </location>
</feature>
<feature type="mutagenesis site" description="Abolishes the hydrolase activity against long chain alkyl ester substrates." evidence="3">
    <original>S</original>
    <variation>A</variation>
    <location>
        <position position="119"/>
    </location>
</feature>
<feature type="mutagenesis site" description="Reduces the hydrolase activity against long chain alkyl ester substrates." evidence="3">
    <original>D</original>
    <variation>A</variation>
    <location>
        <position position="179"/>
    </location>
</feature>
<feature type="mutagenesis site" description="Abolishes the hydrolase activity against long chain alkyl ester substrates." evidence="3">
    <original>H</original>
    <variation>A</variation>
    <location>
        <position position="206"/>
    </location>
</feature>
<feature type="sequence conflict" description="In Ref. 4; AAH40696." evidence="6" ref="4">
    <original>S</original>
    <variation>C</variation>
    <location>
        <position position="84"/>
    </location>
</feature>
<feature type="sequence conflict" description="In Ref. 1; AAC62628." evidence="6" ref="1">
    <original>G</original>
    <variation>S</variation>
    <location>
        <position position="150"/>
    </location>
</feature>
<dbReference type="EC" id="3.1.1.1" evidence="3"/>
<dbReference type="EMBL" id="AF073528">
    <property type="protein sequence ID" value="AAC62628.1"/>
    <property type="molecule type" value="mRNA"/>
</dbReference>
<dbReference type="EMBL" id="AF321875">
    <property type="protein sequence ID" value="AAL35713.1"/>
    <property type="molecule type" value="mRNA"/>
</dbReference>
<dbReference type="EMBL" id="AF335321">
    <property type="protein sequence ID" value="AAN04659.1"/>
    <property type="molecule type" value="Genomic_DNA"/>
</dbReference>
<dbReference type="EMBL" id="BC040696">
    <property type="protein sequence ID" value="AAH40696.1"/>
    <property type="molecule type" value="mRNA"/>
</dbReference>
<dbReference type="EMBL" id="BC041170">
    <property type="protein sequence ID" value="AAH41170.1"/>
    <property type="molecule type" value="mRNA"/>
</dbReference>
<dbReference type="CCDS" id="CCDS11015.1"/>
<dbReference type="RefSeq" id="NP_543012.1">
    <property type="nucleotide sequence ID" value="NM_080822.3"/>
</dbReference>
<dbReference type="SMR" id="Q8WZ82"/>
<dbReference type="BioGRID" id="125881">
    <property type="interactions" value="9"/>
</dbReference>
<dbReference type="FunCoup" id="Q8WZ82">
    <property type="interactions" value="1497"/>
</dbReference>
<dbReference type="IntAct" id="Q8WZ82">
    <property type="interactions" value="2"/>
</dbReference>
<dbReference type="STRING" id="9606.ENSP00000461388"/>
<dbReference type="ESTHER" id="human-OVCA2">
    <property type="family name" value="FSH1"/>
</dbReference>
<dbReference type="iPTMnet" id="Q8WZ82"/>
<dbReference type="PhosphoSitePlus" id="Q8WZ82"/>
<dbReference type="BioMuta" id="OVCA2"/>
<dbReference type="DMDM" id="74731010"/>
<dbReference type="jPOST" id="Q8WZ82"/>
<dbReference type="MassIVE" id="Q8WZ82"/>
<dbReference type="PaxDb" id="9606-ENSP00000461388"/>
<dbReference type="PeptideAtlas" id="Q8WZ82"/>
<dbReference type="ProteomicsDB" id="75237"/>
<dbReference type="Pumba" id="Q8WZ82"/>
<dbReference type="Antibodypedia" id="69773">
    <property type="antibodies" value="59 antibodies from 15 providers"/>
</dbReference>
<dbReference type="DNASU" id="124641"/>
<dbReference type="Ensembl" id="ENST00000572195.3">
    <property type="protein sequence ID" value="ENSP00000461388.1"/>
    <property type="gene ID" value="ENSG00000262664.3"/>
</dbReference>
<dbReference type="GeneID" id="124641"/>
<dbReference type="KEGG" id="hsa:124641"/>
<dbReference type="MANE-Select" id="ENST00000572195.3">
    <property type="protein sequence ID" value="ENSP00000461388.1"/>
    <property type="RefSeq nucleotide sequence ID" value="NM_080822.3"/>
    <property type="RefSeq protein sequence ID" value="NP_543012.1"/>
</dbReference>
<dbReference type="UCSC" id="uc002ftx.4">
    <property type="organism name" value="human"/>
</dbReference>
<dbReference type="AGR" id="HGNC:24203"/>
<dbReference type="CTD" id="124641"/>
<dbReference type="DisGeNET" id="124641"/>
<dbReference type="GeneCards" id="OVCA2"/>
<dbReference type="HGNC" id="HGNC:24203">
    <property type="gene designation" value="OVCA2"/>
</dbReference>
<dbReference type="HPA" id="ENSG00000262664">
    <property type="expression patterns" value="Low tissue specificity"/>
</dbReference>
<dbReference type="MIM" id="607896">
    <property type="type" value="gene"/>
</dbReference>
<dbReference type="neXtProt" id="NX_Q8WZ82"/>
<dbReference type="OpenTargets" id="ENSG00000262664"/>
<dbReference type="PharmGKB" id="PA165432281"/>
<dbReference type="VEuPathDB" id="HostDB:ENSG00000262664"/>
<dbReference type="eggNOG" id="KOG2551">
    <property type="taxonomic scope" value="Eukaryota"/>
</dbReference>
<dbReference type="GeneTree" id="ENSGT00390000003541"/>
<dbReference type="HOGENOM" id="CLU_051938_2_3_1"/>
<dbReference type="InParanoid" id="Q8WZ82"/>
<dbReference type="OMA" id="EEPRGWW"/>
<dbReference type="OrthoDB" id="414698at2759"/>
<dbReference type="PAN-GO" id="Q8WZ82">
    <property type="GO annotations" value="4 GO annotations based on evolutionary models"/>
</dbReference>
<dbReference type="PhylomeDB" id="Q8WZ82"/>
<dbReference type="TreeFam" id="TF313006"/>
<dbReference type="PathwayCommons" id="Q8WZ82"/>
<dbReference type="SignaLink" id="Q8WZ82"/>
<dbReference type="BioGRID-ORCS" id="124641">
    <property type="hits" value="50 hits in 1151 CRISPR screens"/>
</dbReference>
<dbReference type="GenomeRNAi" id="124641"/>
<dbReference type="Pharos" id="Q8WZ82">
    <property type="development level" value="Tbio"/>
</dbReference>
<dbReference type="PRO" id="PR:Q8WZ82"/>
<dbReference type="Proteomes" id="UP000005640">
    <property type="component" value="Chromosome 17"/>
</dbReference>
<dbReference type="RNAct" id="Q8WZ82">
    <property type="molecule type" value="protein"/>
</dbReference>
<dbReference type="Bgee" id="ENSG00000262664">
    <property type="expression patterns" value="Expressed in mucosa of transverse colon and 95 other cell types or tissues"/>
</dbReference>
<dbReference type="GO" id="GO:0005737">
    <property type="term" value="C:cytoplasm"/>
    <property type="evidence" value="ECO:0000314"/>
    <property type="project" value="UniProtKB"/>
</dbReference>
<dbReference type="GO" id="GO:0005739">
    <property type="term" value="C:mitochondrion"/>
    <property type="evidence" value="ECO:0006056"/>
    <property type="project" value="FlyBase"/>
</dbReference>
<dbReference type="GO" id="GO:0005634">
    <property type="term" value="C:nucleus"/>
    <property type="evidence" value="ECO:0000318"/>
    <property type="project" value="GO_Central"/>
</dbReference>
<dbReference type="GO" id="GO:0016787">
    <property type="term" value="F:hydrolase activity"/>
    <property type="evidence" value="ECO:0000318"/>
    <property type="project" value="GO_Central"/>
</dbReference>
<dbReference type="GO" id="GO:0032526">
    <property type="term" value="P:response to retinoic acid"/>
    <property type="evidence" value="ECO:0000314"/>
    <property type="project" value="UniProtKB"/>
</dbReference>
<dbReference type="FunFam" id="3.40.50.1820:FF:000073">
    <property type="entry name" value="esterase OVCA2 isoform X6"/>
    <property type="match status" value="1"/>
</dbReference>
<dbReference type="Gene3D" id="3.40.50.1820">
    <property type="entry name" value="alpha/beta hydrolase"/>
    <property type="match status" value="1"/>
</dbReference>
<dbReference type="InterPro" id="IPR029058">
    <property type="entry name" value="AB_hydrolase_fold"/>
</dbReference>
<dbReference type="InterPro" id="IPR005645">
    <property type="entry name" value="FSH-like_dom"/>
</dbReference>
<dbReference type="InterPro" id="IPR050593">
    <property type="entry name" value="LovG"/>
</dbReference>
<dbReference type="PANTHER" id="PTHR48070">
    <property type="entry name" value="ESTERASE OVCA2"/>
    <property type="match status" value="1"/>
</dbReference>
<dbReference type="PANTHER" id="PTHR48070:SF6">
    <property type="entry name" value="ESTERASE OVCA2"/>
    <property type="match status" value="1"/>
</dbReference>
<dbReference type="Pfam" id="PF03959">
    <property type="entry name" value="FSH1"/>
    <property type="match status" value="1"/>
</dbReference>
<dbReference type="SUPFAM" id="SSF53474">
    <property type="entry name" value="alpha/beta-Hydrolases"/>
    <property type="match status" value="1"/>
</dbReference>
<comment type="function">
    <text evidence="3">Exhibits ester hydrolase activity with a strong preference for long-chain alkyl ester substrates and high selectivity against a variety of short, branched, and substituted esters. Is able to hydrolyze ester bonds within a wide range of p-nitrophenyl derivatives (C2-C14) in vitro, with a strong preference toward substrates of &gt;8 carbons.</text>
</comment>
<comment type="catalytic activity">
    <reaction evidence="3">
        <text>a carboxylic ester + H2O = an alcohol + a carboxylate + H(+)</text>
        <dbReference type="Rhea" id="RHEA:21164"/>
        <dbReference type="ChEBI" id="CHEBI:15377"/>
        <dbReference type="ChEBI" id="CHEBI:15378"/>
        <dbReference type="ChEBI" id="CHEBI:29067"/>
        <dbReference type="ChEBI" id="CHEBI:30879"/>
        <dbReference type="ChEBI" id="CHEBI:33308"/>
        <dbReference type="EC" id="3.1.1.1"/>
    </reaction>
</comment>
<comment type="biophysicochemical properties">
    <kinetics>
        <KM evidence="3">0.16 mM for p-nitrophenyl valerate</KM>
        <KM evidence="3">0.00384 mM for p-nitrophenyl decanoate</KM>
        <KM evidence="3">0.029 mM for p-nitrophenyl laurate</KM>
        <KM evidence="3">0.017 mM for p-nitrophenyl myristate</KM>
    </kinetics>
</comment>
<comment type="tissue specificity">
    <text evidence="2 4">Ubiquitously expressed.</text>
</comment>
<comment type="PTM">
    <text>Proteolytically degraded in response to RA and 4HPR treatment in a time- and dose-dependent manner in the promyelocytic leukemia cell line HL-60.</text>
</comment>
<comment type="similarity">
    <text evidence="6">Belongs to the LovG family.</text>
</comment>
<comment type="caution">
    <text evidence="6">Encoded in an intron of the gene DPH1/OVCA1 (same strand).</text>
</comment>
<reference key="1">
    <citation type="journal article" date="1996" name="Cancer Res.">
        <title>Identification of two candidate tumor suppressor genes on chromosome 17p13.3.</title>
        <authorList>
            <person name="Schultz D.C."/>
            <person name="Vanderveer L."/>
            <person name="Berman D.B."/>
            <person name="Hamilton T.C."/>
            <person name="Wong A.J."/>
            <person name="Godwin A.K."/>
        </authorList>
    </citation>
    <scope>NUCLEOTIDE SEQUENCE [MRNA]</scope>
    <scope>TISSUE SPECIFICITY</scope>
    <source>
        <tissue>Ovary</tissue>
    </source>
</reference>
<reference key="2">
    <citation type="journal article" date="2002" name="Int. J. Cancer">
        <title>OVCA2 is downregulated and degraded during retinoid-induced apoptosis.</title>
        <authorList>
            <person name="Prowse A.H."/>
            <person name="Vanderveer L."/>
            <person name="Milling S.W."/>
            <person name="Pan Z.Z."/>
            <person name="Dunbrack R.L."/>
            <person name="Xu X.X."/>
            <person name="Godwin A.K."/>
        </authorList>
    </citation>
    <scope>NUCLEOTIDE SEQUENCE [MRNA]</scope>
    <scope>TISSUE SPECIFICITY</scope>
    <scope>PROTEOLYTIC DEGRADATION</scope>
</reference>
<reference key="3">
    <citation type="submission" date="2001-01" db="EMBL/GenBank/DDBJ databases">
        <title>OVCA locus.</title>
        <authorList>
            <person name="Godwin A.K."/>
            <person name="Vanderveer L.A."/>
            <person name="Schultz D.C."/>
        </authorList>
    </citation>
    <scope>NUCLEOTIDE SEQUENCE [GENOMIC DNA]</scope>
</reference>
<reference key="4">
    <citation type="journal article" date="2004" name="Genome Res.">
        <title>The status, quality, and expansion of the NIH full-length cDNA project: the Mammalian Gene Collection (MGC).</title>
        <authorList>
            <consortium name="The MGC Project Team"/>
        </authorList>
    </citation>
    <scope>NUCLEOTIDE SEQUENCE [LARGE SCALE MRNA]</scope>
    <source>
        <tissue>Duodenum</tissue>
        <tissue>Skin</tissue>
    </source>
</reference>
<reference key="5">
    <citation type="journal article" date="2011" name="BMC Syst. Biol.">
        <title>Initial characterization of the human central proteome.</title>
        <authorList>
            <person name="Burkard T.R."/>
            <person name="Planyavsky M."/>
            <person name="Kaupe I."/>
            <person name="Breitwieser F.P."/>
            <person name="Buerckstuemmer T."/>
            <person name="Bennett K.L."/>
            <person name="Superti-Furga G."/>
            <person name="Colinge J."/>
        </authorList>
    </citation>
    <scope>IDENTIFICATION BY MASS SPECTROMETRY [LARGE SCALE ANALYSIS]</scope>
</reference>
<reference key="6">
    <citation type="journal article" date="2014" name="J. Proteomics">
        <title>An enzyme assisted RP-RPLC approach for in-depth analysis of human liver phosphoproteome.</title>
        <authorList>
            <person name="Bian Y."/>
            <person name="Song C."/>
            <person name="Cheng K."/>
            <person name="Dong M."/>
            <person name="Wang F."/>
            <person name="Huang J."/>
            <person name="Sun D."/>
            <person name="Wang L."/>
            <person name="Ye M."/>
            <person name="Zou H."/>
        </authorList>
    </citation>
    <scope>IDENTIFICATION BY MASS SPECTROMETRY [LARGE SCALE ANALYSIS]</scope>
    <source>
        <tissue>Liver</tissue>
    </source>
</reference>
<reference key="7">
    <citation type="journal article" date="2015" name="Proteomics">
        <title>N-terminome analysis of the human mitochondrial proteome.</title>
        <authorList>
            <person name="Vaca Jacome A.S."/>
            <person name="Rabilloud T."/>
            <person name="Schaeffer-Reiss C."/>
            <person name="Rompais M."/>
            <person name="Ayoub D."/>
            <person name="Lane L."/>
            <person name="Bairoch A."/>
            <person name="Van Dorsselaer A."/>
            <person name="Carapito C."/>
        </authorList>
    </citation>
    <scope>IDENTIFICATION BY MASS SPECTROMETRY [LARGE SCALE ANALYSIS]</scope>
</reference>
<reference key="8">
    <citation type="journal article" date="2020" name="PLoS ONE">
        <title>Comparative analysis of the human serine hydrolase OVCA2 to the model serine hydrolase homolog FSH1 from S. cerevisiae.</title>
        <authorList>
            <person name="Bun J.S."/>
            <person name="Slack M.D."/>
            <person name="Schemenauer D.E."/>
            <person name="Johnson R.J."/>
        </authorList>
    </citation>
    <scope>FUNCTION</scope>
    <scope>CATALYTIC ACTIVITY</scope>
    <scope>BIOPHYSICOCHEMICAL PROPERTIES</scope>
    <scope>SUBSTRATE SPECIFICITY</scope>
    <scope>MUTAGENESIS OF SER-119; ASP-179 AND HIS-206</scope>
</reference>
<protein>
    <recommendedName>
        <fullName>Esterase OVCA2</fullName>
        <ecNumber evidence="3">3.1.1.1</ecNumber>
    </recommendedName>
    <alternativeName>
        <fullName>OVCA2 serine hydrolase domain-containing protein</fullName>
    </alternativeName>
    <alternativeName>
        <fullName evidence="5">Ovarian cancer-associated gene 2 protein</fullName>
    </alternativeName>
</protein>
<name>OVCA2_HUMAN</name>
<evidence type="ECO:0000256" key="1">
    <source>
        <dbReference type="SAM" id="MobiDB-lite"/>
    </source>
</evidence>
<evidence type="ECO:0000269" key="2">
    <source>
    </source>
</evidence>
<evidence type="ECO:0000269" key="3">
    <source>
    </source>
</evidence>
<evidence type="ECO:0000269" key="4">
    <source>
    </source>
</evidence>
<evidence type="ECO:0000303" key="5">
    <source>
    </source>
</evidence>
<evidence type="ECO:0000305" key="6"/>
<evidence type="ECO:0000305" key="7">
    <source>
    </source>
</evidence>
<evidence type="ECO:0000312" key="8">
    <source>
        <dbReference type="HGNC" id="HGNC:24203"/>
    </source>
</evidence>
<sequence length="227" mass="24418">MAAQRPLRVLCLAGFRQSERGFREKTGALRKALRGRAELVCLSGPHPVPDPPGPEGARSDFGSCPPEEQPRGWWFSEQEADVFSALEEPAVCRGLEESLGMVAQALNRLGPFDGLLGFSQGAALAALVCALGQAGDPRFPLPRFILLVSGFCPRGIGFKESILQRPLSLPSLHVFGDTDKVIPSQESVQLASQFPGAITLTHSGGHFIPAAAPQRQAYLKFLDQFAE</sequence>
<organism>
    <name type="scientific">Homo sapiens</name>
    <name type="common">Human</name>
    <dbReference type="NCBI Taxonomy" id="9606"/>
    <lineage>
        <taxon>Eukaryota</taxon>
        <taxon>Metazoa</taxon>
        <taxon>Chordata</taxon>
        <taxon>Craniata</taxon>
        <taxon>Vertebrata</taxon>
        <taxon>Euteleostomi</taxon>
        <taxon>Mammalia</taxon>
        <taxon>Eutheria</taxon>
        <taxon>Euarchontoglires</taxon>
        <taxon>Primates</taxon>
        <taxon>Haplorrhini</taxon>
        <taxon>Catarrhini</taxon>
        <taxon>Hominidae</taxon>
        <taxon>Homo</taxon>
    </lineage>
</organism>
<proteinExistence type="evidence at protein level"/>
<gene>
    <name evidence="8" type="primary">OVCA2</name>
</gene>
<keyword id="KW-0378">Hydrolase</keyword>
<keyword id="KW-1267">Proteomics identification</keyword>
<keyword id="KW-1185">Reference proteome</keyword>
<keyword id="KW-0719">Serine esterase</keyword>